<organism>
    <name type="scientific">Streptococcus pyogenes serotype M49 (strain NZ131)</name>
    <dbReference type="NCBI Taxonomy" id="471876"/>
    <lineage>
        <taxon>Bacteria</taxon>
        <taxon>Bacillati</taxon>
        <taxon>Bacillota</taxon>
        <taxon>Bacilli</taxon>
        <taxon>Lactobacillales</taxon>
        <taxon>Streptococcaceae</taxon>
        <taxon>Streptococcus</taxon>
    </lineage>
</organism>
<name>DEF_STRPZ</name>
<reference key="1">
    <citation type="journal article" date="2008" name="J. Bacteriol.">
        <title>Genome sequence of a nephritogenic and highly transformable M49 strain of Streptococcus pyogenes.</title>
        <authorList>
            <person name="McShan W.M."/>
            <person name="Ferretti J.J."/>
            <person name="Karasawa T."/>
            <person name="Suvorov A.N."/>
            <person name="Lin S."/>
            <person name="Qin B."/>
            <person name="Jia H."/>
            <person name="Kenton S."/>
            <person name="Najar F."/>
            <person name="Wu H."/>
            <person name="Scott J."/>
            <person name="Roe B.A."/>
            <person name="Savic D.J."/>
        </authorList>
    </citation>
    <scope>NUCLEOTIDE SEQUENCE [LARGE SCALE GENOMIC DNA]</scope>
    <source>
        <strain>NZ131</strain>
    </source>
</reference>
<feature type="chain" id="PRO_1000097351" description="Peptide deformylase">
    <location>
        <begin position="1"/>
        <end position="204"/>
    </location>
</feature>
<feature type="active site" evidence="1">
    <location>
        <position position="175"/>
    </location>
</feature>
<feature type="binding site" evidence="1">
    <location>
        <position position="131"/>
    </location>
    <ligand>
        <name>Fe cation</name>
        <dbReference type="ChEBI" id="CHEBI:24875"/>
    </ligand>
</feature>
<feature type="binding site" evidence="1">
    <location>
        <position position="174"/>
    </location>
    <ligand>
        <name>Fe cation</name>
        <dbReference type="ChEBI" id="CHEBI:24875"/>
    </ligand>
</feature>
<feature type="binding site" evidence="1">
    <location>
        <position position="178"/>
    </location>
    <ligand>
        <name>Fe cation</name>
        <dbReference type="ChEBI" id="CHEBI:24875"/>
    </ligand>
</feature>
<keyword id="KW-0378">Hydrolase</keyword>
<keyword id="KW-0408">Iron</keyword>
<keyword id="KW-0479">Metal-binding</keyword>
<keyword id="KW-0648">Protein biosynthesis</keyword>
<dbReference type="EC" id="3.5.1.88" evidence="1"/>
<dbReference type="EMBL" id="CP000829">
    <property type="protein sequence ID" value="ACI61873.1"/>
    <property type="molecule type" value="Genomic_DNA"/>
</dbReference>
<dbReference type="SMR" id="B5XIL1"/>
<dbReference type="KEGG" id="soz:Spy49_1615"/>
<dbReference type="HOGENOM" id="CLU_061901_4_0_9"/>
<dbReference type="Proteomes" id="UP000001039">
    <property type="component" value="Chromosome"/>
</dbReference>
<dbReference type="GO" id="GO:0046872">
    <property type="term" value="F:metal ion binding"/>
    <property type="evidence" value="ECO:0007669"/>
    <property type="project" value="UniProtKB-KW"/>
</dbReference>
<dbReference type="GO" id="GO:0042586">
    <property type="term" value="F:peptide deformylase activity"/>
    <property type="evidence" value="ECO:0007669"/>
    <property type="project" value="UniProtKB-UniRule"/>
</dbReference>
<dbReference type="GO" id="GO:0043686">
    <property type="term" value="P:co-translational protein modification"/>
    <property type="evidence" value="ECO:0007669"/>
    <property type="project" value="TreeGrafter"/>
</dbReference>
<dbReference type="GO" id="GO:0006412">
    <property type="term" value="P:translation"/>
    <property type="evidence" value="ECO:0007669"/>
    <property type="project" value="UniProtKB-UniRule"/>
</dbReference>
<dbReference type="CDD" id="cd00487">
    <property type="entry name" value="Pep_deformylase"/>
    <property type="match status" value="1"/>
</dbReference>
<dbReference type="FunFam" id="3.90.45.10:FF:000002">
    <property type="entry name" value="Peptide deformylase"/>
    <property type="match status" value="1"/>
</dbReference>
<dbReference type="Gene3D" id="3.90.45.10">
    <property type="entry name" value="Peptide deformylase"/>
    <property type="match status" value="1"/>
</dbReference>
<dbReference type="HAMAP" id="MF_00163">
    <property type="entry name" value="Pep_deformylase"/>
    <property type="match status" value="1"/>
</dbReference>
<dbReference type="InterPro" id="IPR023635">
    <property type="entry name" value="Peptide_deformylase"/>
</dbReference>
<dbReference type="InterPro" id="IPR036821">
    <property type="entry name" value="Peptide_deformylase_sf"/>
</dbReference>
<dbReference type="NCBIfam" id="TIGR00079">
    <property type="entry name" value="pept_deformyl"/>
    <property type="match status" value="1"/>
</dbReference>
<dbReference type="PANTHER" id="PTHR10458">
    <property type="entry name" value="PEPTIDE DEFORMYLASE"/>
    <property type="match status" value="1"/>
</dbReference>
<dbReference type="PANTHER" id="PTHR10458:SF8">
    <property type="entry name" value="PEPTIDE DEFORMYLASE 2"/>
    <property type="match status" value="1"/>
</dbReference>
<dbReference type="Pfam" id="PF01327">
    <property type="entry name" value="Pep_deformylase"/>
    <property type="match status" value="1"/>
</dbReference>
<dbReference type="PIRSF" id="PIRSF004749">
    <property type="entry name" value="Pep_def"/>
    <property type="match status" value="1"/>
</dbReference>
<dbReference type="PRINTS" id="PR01576">
    <property type="entry name" value="PDEFORMYLASE"/>
</dbReference>
<dbReference type="SUPFAM" id="SSF56420">
    <property type="entry name" value="Peptide deformylase"/>
    <property type="match status" value="1"/>
</dbReference>
<sequence length="204" mass="22861">MSAQDKLIKPSHLITMDDIIREGNPTLRAVAKEVSLPLCDEDILLGEKMMQFLKHSQNPVMAEKLGLRAGVGLAAPQIDVSKRIIAVLVPNLPDKEGNPPKEAYSWQEVLYNPKIVSHSVQDAALSDGEGCLSVDRVVEGYVVRHARVTVDYYDKEGQQHRIKLKGYNAIVVQHEIDHINGVLFYDRINAKNPFETKEELLILD</sequence>
<accession>B5XIL1</accession>
<protein>
    <recommendedName>
        <fullName evidence="1">Peptide deformylase</fullName>
        <shortName evidence="1">PDF</shortName>
        <ecNumber evidence="1">3.5.1.88</ecNumber>
    </recommendedName>
    <alternativeName>
        <fullName evidence="1">Polypeptide deformylase</fullName>
    </alternativeName>
</protein>
<evidence type="ECO:0000255" key="1">
    <source>
        <dbReference type="HAMAP-Rule" id="MF_00163"/>
    </source>
</evidence>
<gene>
    <name evidence="1" type="primary">def</name>
    <name type="ordered locus">Spy49_1615</name>
</gene>
<comment type="function">
    <text evidence="1">Removes the formyl group from the N-terminal Met of newly synthesized proteins. Requires at least a dipeptide for an efficient rate of reaction. N-terminal L-methionine is a prerequisite for activity but the enzyme has broad specificity at other positions.</text>
</comment>
<comment type="catalytic activity">
    <reaction evidence="1">
        <text>N-terminal N-formyl-L-methionyl-[peptide] + H2O = N-terminal L-methionyl-[peptide] + formate</text>
        <dbReference type="Rhea" id="RHEA:24420"/>
        <dbReference type="Rhea" id="RHEA-COMP:10639"/>
        <dbReference type="Rhea" id="RHEA-COMP:10640"/>
        <dbReference type="ChEBI" id="CHEBI:15377"/>
        <dbReference type="ChEBI" id="CHEBI:15740"/>
        <dbReference type="ChEBI" id="CHEBI:49298"/>
        <dbReference type="ChEBI" id="CHEBI:64731"/>
        <dbReference type="EC" id="3.5.1.88"/>
    </reaction>
</comment>
<comment type="cofactor">
    <cofactor evidence="1">
        <name>Fe(2+)</name>
        <dbReference type="ChEBI" id="CHEBI:29033"/>
    </cofactor>
    <text evidence="1">Binds 1 Fe(2+) ion.</text>
</comment>
<comment type="similarity">
    <text evidence="1">Belongs to the polypeptide deformylase family.</text>
</comment>
<proteinExistence type="inferred from homology"/>